<name>NT5C_HUMAN</name>
<accession>Q8TCD5</accession>
<accession>Q96HS6</accession>
<accession>Q9NP82</accession>
<proteinExistence type="evidence at protein level"/>
<organism>
    <name type="scientific">Homo sapiens</name>
    <name type="common">Human</name>
    <dbReference type="NCBI Taxonomy" id="9606"/>
    <lineage>
        <taxon>Eukaryota</taxon>
        <taxon>Metazoa</taxon>
        <taxon>Chordata</taxon>
        <taxon>Craniata</taxon>
        <taxon>Vertebrata</taxon>
        <taxon>Euteleostomi</taxon>
        <taxon>Mammalia</taxon>
        <taxon>Eutheria</taxon>
        <taxon>Euarchontoglires</taxon>
        <taxon>Primates</taxon>
        <taxon>Haplorrhini</taxon>
        <taxon>Catarrhini</taxon>
        <taxon>Hominidae</taxon>
        <taxon>Homo</taxon>
    </lineage>
</organism>
<sequence length="201" mass="23383">MARSVRVLVDMDGVLADFEAGLLRGFRRRFPEEPHVPLEQRRGFLAREQYRALRPDLADKVASVYEAPGFFLDLEPIPGALDAVREMNDLPDTQVFICTSPLLKYHHCVGEKYRWVEQHLGPQFVERIILTRDKTVVLGDLLIDDKDTVRGQEETPSWEHILFTCCHNRHLVLPPTRRRLLSWSDNWREILDSKRGAAQRE</sequence>
<evidence type="ECO:0000250" key="1"/>
<evidence type="ECO:0000269" key="2">
    <source>
    </source>
</evidence>
<evidence type="ECO:0000269" key="3">
    <source>
    </source>
</evidence>
<evidence type="ECO:0000269" key="4">
    <source>
    </source>
</evidence>
<evidence type="ECO:0000303" key="5">
    <source>
    </source>
</evidence>
<evidence type="ECO:0000305" key="6"/>
<evidence type="ECO:0007744" key="7">
    <source>
    </source>
</evidence>
<evidence type="ECO:0007744" key="8">
    <source>
    </source>
</evidence>
<evidence type="ECO:0007744" key="9">
    <source>
    </source>
</evidence>
<evidence type="ECO:0007829" key="10">
    <source>
        <dbReference type="PDB" id="4L57"/>
    </source>
</evidence>
<evidence type="ECO:0007829" key="11">
    <source>
        <dbReference type="PDB" id="6G2N"/>
    </source>
</evidence>
<keyword id="KW-0002">3D-structure</keyword>
<keyword id="KW-0025">Alternative splicing</keyword>
<keyword id="KW-0963">Cytoplasm</keyword>
<keyword id="KW-0903">Direct protein sequencing</keyword>
<keyword id="KW-0378">Hydrolase</keyword>
<keyword id="KW-0460">Magnesium</keyword>
<keyword id="KW-0479">Metal-binding</keyword>
<keyword id="KW-0546">Nucleotide metabolism</keyword>
<keyword id="KW-0547">Nucleotide-binding</keyword>
<keyword id="KW-0597">Phosphoprotein</keyword>
<keyword id="KW-1267">Proteomics identification</keyword>
<keyword id="KW-1185">Reference proteome</keyword>
<protein>
    <recommendedName>
        <fullName>5'(3')-deoxyribonucleotidase, cytosolic type</fullName>
        <ecNumber>3.1.3.-</ecNumber>
    </recommendedName>
    <alternativeName>
        <fullName>Cytosolic 5',3'-pyrimidine nucleotidase</fullName>
    </alternativeName>
    <alternativeName>
        <fullName>Deoxy-5'-nucleotidase 1</fullName>
        <shortName>dNT-1</shortName>
    </alternativeName>
</protein>
<reference key="1">
    <citation type="journal article" date="2000" name="J. Biol. Chem.">
        <title>Mammalian 5'(3')-deoxyribonucleotidase, cDNA cloning, and overexpression of the enzyme in Escherichia coli and mammalian cells.</title>
        <authorList>
            <person name="Rampazzo C."/>
            <person name="Johansson M."/>
            <person name="Gallinaro L."/>
            <person name="Ferraro P."/>
            <person name="Hellman U."/>
            <person name="Karlsson A."/>
            <person name="Reichard P."/>
            <person name="Bianchi V."/>
        </authorList>
    </citation>
    <scope>NUCLEOTIDE SEQUENCE [MRNA] (ISOFORM 1)</scope>
    <scope>PROTEIN SEQUENCE OF 52-66; 99-112; 114-121 AND 125-146</scope>
    <scope>TISSUE SPECIFICITY</scope>
</reference>
<reference key="2">
    <citation type="journal article" date="2004" name="Nat. Genet.">
        <title>Complete sequencing and characterization of 21,243 full-length human cDNAs.</title>
        <authorList>
            <person name="Ota T."/>
            <person name="Suzuki Y."/>
            <person name="Nishikawa T."/>
            <person name="Otsuki T."/>
            <person name="Sugiyama T."/>
            <person name="Irie R."/>
            <person name="Wakamatsu A."/>
            <person name="Hayashi K."/>
            <person name="Sato H."/>
            <person name="Nagai K."/>
            <person name="Kimura K."/>
            <person name="Makita H."/>
            <person name="Sekine M."/>
            <person name="Obayashi M."/>
            <person name="Nishi T."/>
            <person name="Shibahara T."/>
            <person name="Tanaka T."/>
            <person name="Ishii S."/>
            <person name="Yamamoto J."/>
            <person name="Saito K."/>
            <person name="Kawai Y."/>
            <person name="Isono Y."/>
            <person name="Nakamura Y."/>
            <person name="Nagahari K."/>
            <person name="Murakami K."/>
            <person name="Yasuda T."/>
            <person name="Iwayanagi T."/>
            <person name="Wagatsuma M."/>
            <person name="Shiratori A."/>
            <person name="Sudo H."/>
            <person name="Hosoiri T."/>
            <person name="Kaku Y."/>
            <person name="Kodaira H."/>
            <person name="Kondo H."/>
            <person name="Sugawara M."/>
            <person name="Takahashi M."/>
            <person name="Kanda K."/>
            <person name="Yokoi T."/>
            <person name="Furuya T."/>
            <person name="Kikkawa E."/>
            <person name="Omura Y."/>
            <person name="Abe K."/>
            <person name="Kamihara K."/>
            <person name="Katsuta N."/>
            <person name="Sato K."/>
            <person name="Tanikawa M."/>
            <person name="Yamazaki M."/>
            <person name="Ninomiya K."/>
            <person name="Ishibashi T."/>
            <person name="Yamashita H."/>
            <person name="Murakawa K."/>
            <person name="Fujimori K."/>
            <person name="Tanai H."/>
            <person name="Kimata M."/>
            <person name="Watanabe M."/>
            <person name="Hiraoka S."/>
            <person name="Chiba Y."/>
            <person name="Ishida S."/>
            <person name="Ono Y."/>
            <person name="Takiguchi S."/>
            <person name="Watanabe S."/>
            <person name="Yosida M."/>
            <person name="Hotuta T."/>
            <person name="Kusano J."/>
            <person name="Kanehori K."/>
            <person name="Takahashi-Fujii A."/>
            <person name="Hara H."/>
            <person name="Tanase T.-O."/>
            <person name="Nomura Y."/>
            <person name="Togiya S."/>
            <person name="Komai F."/>
            <person name="Hara R."/>
            <person name="Takeuchi K."/>
            <person name="Arita M."/>
            <person name="Imose N."/>
            <person name="Musashino K."/>
            <person name="Yuuki H."/>
            <person name="Oshima A."/>
            <person name="Sasaki N."/>
            <person name="Aotsuka S."/>
            <person name="Yoshikawa Y."/>
            <person name="Matsunawa H."/>
            <person name="Ichihara T."/>
            <person name="Shiohata N."/>
            <person name="Sano S."/>
            <person name="Moriya S."/>
            <person name="Momiyama H."/>
            <person name="Satoh N."/>
            <person name="Takami S."/>
            <person name="Terashima Y."/>
            <person name="Suzuki O."/>
            <person name="Nakagawa S."/>
            <person name="Senoh A."/>
            <person name="Mizoguchi H."/>
            <person name="Goto Y."/>
            <person name="Shimizu F."/>
            <person name="Wakebe H."/>
            <person name="Hishigaki H."/>
            <person name="Watanabe T."/>
            <person name="Sugiyama A."/>
            <person name="Takemoto M."/>
            <person name="Kawakami B."/>
            <person name="Yamazaki M."/>
            <person name="Watanabe K."/>
            <person name="Kumagai A."/>
            <person name="Itakura S."/>
            <person name="Fukuzumi Y."/>
            <person name="Fujimori Y."/>
            <person name="Komiyama M."/>
            <person name="Tashiro H."/>
            <person name="Tanigami A."/>
            <person name="Fujiwara T."/>
            <person name="Ono T."/>
            <person name="Yamada K."/>
            <person name="Fujii Y."/>
            <person name="Ozaki K."/>
            <person name="Hirao M."/>
            <person name="Ohmori Y."/>
            <person name="Kawabata A."/>
            <person name="Hikiji T."/>
            <person name="Kobatake N."/>
            <person name="Inagaki H."/>
            <person name="Ikema Y."/>
            <person name="Okamoto S."/>
            <person name="Okitani R."/>
            <person name="Kawakami T."/>
            <person name="Noguchi S."/>
            <person name="Itoh T."/>
            <person name="Shigeta K."/>
            <person name="Senba T."/>
            <person name="Matsumura K."/>
            <person name="Nakajima Y."/>
            <person name="Mizuno T."/>
            <person name="Morinaga M."/>
            <person name="Sasaki M."/>
            <person name="Togashi T."/>
            <person name="Oyama M."/>
            <person name="Hata H."/>
            <person name="Watanabe M."/>
            <person name="Komatsu T."/>
            <person name="Mizushima-Sugano J."/>
            <person name="Satoh T."/>
            <person name="Shirai Y."/>
            <person name="Takahashi Y."/>
            <person name="Nakagawa K."/>
            <person name="Okumura K."/>
            <person name="Nagase T."/>
            <person name="Nomura N."/>
            <person name="Kikuchi H."/>
            <person name="Masuho Y."/>
            <person name="Yamashita R."/>
            <person name="Nakai K."/>
            <person name="Yada T."/>
            <person name="Nakamura Y."/>
            <person name="Ohara O."/>
            <person name="Isogai T."/>
            <person name="Sugano S."/>
        </authorList>
    </citation>
    <scope>NUCLEOTIDE SEQUENCE [LARGE SCALE MRNA] (ISOFORM 1)</scope>
</reference>
<reference key="3">
    <citation type="journal article" date="2006" name="Nature">
        <title>DNA sequence of human chromosome 17 and analysis of rearrangement in the human lineage.</title>
        <authorList>
            <person name="Zody M.C."/>
            <person name="Garber M."/>
            <person name="Adams D.J."/>
            <person name="Sharpe T."/>
            <person name="Harrow J."/>
            <person name="Lupski J.R."/>
            <person name="Nicholson C."/>
            <person name="Searle S.M."/>
            <person name="Wilming L."/>
            <person name="Young S.K."/>
            <person name="Abouelleil A."/>
            <person name="Allen N.R."/>
            <person name="Bi W."/>
            <person name="Bloom T."/>
            <person name="Borowsky M.L."/>
            <person name="Bugalter B.E."/>
            <person name="Butler J."/>
            <person name="Chang J.L."/>
            <person name="Chen C.-K."/>
            <person name="Cook A."/>
            <person name="Corum B."/>
            <person name="Cuomo C.A."/>
            <person name="de Jong P.J."/>
            <person name="DeCaprio D."/>
            <person name="Dewar K."/>
            <person name="FitzGerald M."/>
            <person name="Gilbert J."/>
            <person name="Gibson R."/>
            <person name="Gnerre S."/>
            <person name="Goldstein S."/>
            <person name="Grafham D.V."/>
            <person name="Grocock R."/>
            <person name="Hafez N."/>
            <person name="Hagopian D.S."/>
            <person name="Hart E."/>
            <person name="Norman C.H."/>
            <person name="Humphray S."/>
            <person name="Jaffe D.B."/>
            <person name="Jones M."/>
            <person name="Kamal M."/>
            <person name="Khodiyar V.K."/>
            <person name="LaButti K."/>
            <person name="Laird G."/>
            <person name="Lehoczky J."/>
            <person name="Liu X."/>
            <person name="Lokyitsang T."/>
            <person name="Loveland J."/>
            <person name="Lui A."/>
            <person name="Macdonald P."/>
            <person name="Major J.E."/>
            <person name="Matthews L."/>
            <person name="Mauceli E."/>
            <person name="McCarroll S.A."/>
            <person name="Mihalev A.H."/>
            <person name="Mudge J."/>
            <person name="Nguyen C."/>
            <person name="Nicol R."/>
            <person name="O'Leary S.B."/>
            <person name="Osoegawa K."/>
            <person name="Schwartz D.C."/>
            <person name="Shaw-Smith C."/>
            <person name="Stankiewicz P."/>
            <person name="Steward C."/>
            <person name="Swarbreck D."/>
            <person name="Venkataraman V."/>
            <person name="Whittaker C.A."/>
            <person name="Yang X."/>
            <person name="Zimmer A.R."/>
            <person name="Bradley A."/>
            <person name="Hubbard T."/>
            <person name="Birren B.W."/>
            <person name="Rogers J."/>
            <person name="Lander E.S."/>
            <person name="Nusbaum C."/>
        </authorList>
    </citation>
    <scope>NUCLEOTIDE SEQUENCE [LARGE SCALE GENOMIC DNA]</scope>
</reference>
<reference key="4">
    <citation type="journal article" date="2004" name="Genome Res.">
        <title>The status, quality, and expansion of the NIH full-length cDNA project: the Mammalian Gene Collection (MGC).</title>
        <authorList>
            <consortium name="The MGC Project Team"/>
        </authorList>
    </citation>
    <scope>NUCLEOTIDE SEQUENCE [LARGE SCALE MRNA] (ISOFORMS 1 AND 2)</scope>
    <scope>VARIANT LEU-68</scope>
    <source>
        <tissue>Brain</tissue>
        <tissue>Eye</tissue>
        <tissue>Lung</tissue>
    </source>
</reference>
<reference key="5">
    <citation type="journal article" date="2002" name="Gene">
        <title>Mouse cytosolic and mitochondrial deoxyribonucleotidases: cDNA cloning of the mitochondrial enzyme, gene structures, chromosomal mapping and comparison with the human orthologs.</title>
        <authorList>
            <person name="Rampazzo C."/>
            <person name="Kost-Alimova M."/>
            <person name="Ruzzenente B."/>
            <person name="Dumanski J.P."/>
            <person name="Bianchi V."/>
        </authorList>
    </citation>
    <scope>GENE STRUCTURE</scope>
</reference>
<reference key="6">
    <citation type="journal article" date="2008" name="Proc. Natl. Acad. Sci. U.S.A.">
        <title>A quantitative atlas of mitotic phosphorylation.</title>
        <authorList>
            <person name="Dephoure N."/>
            <person name="Zhou C."/>
            <person name="Villen J."/>
            <person name="Beausoleil S.A."/>
            <person name="Bakalarski C.E."/>
            <person name="Elledge S.J."/>
            <person name="Gygi S.P."/>
        </authorList>
    </citation>
    <scope>PHOSPHORYLATION [LARGE SCALE ANALYSIS] AT SER-182</scope>
    <scope>IDENTIFICATION BY MASS SPECTROMETRY [LARGE SCALE ANALYSIS]</scope>
    <source>
        <tissue>Cervix carcinoma</tissue>
    </source>
</reference>
<reference key="7">
    <citation type="journal article" date="2009" name="Sci. Signal.">
        <title>Quantitative phosphoproteomic analysis of T cell receptor signaling reveals system-wide modulation of protein-protein interactions.</title>
        <authorList>
            <person name="Mayya V."/>
            <person name="Lundgren D.H."/>
            <person name="Hwang S.-I."/>
            <person name="Rezaul K."/>
            <person name="Wu L."/>
            <person name="Eng J.K."/>
            <person name="Rodionov V."/>
            <person name="Han D.K."/>
        </authorList>
    </citation>
    <scope>PHOSPHORYLATION [LARGE SCALE ANALYSIS] AT SER-182</scope>
    <scope>IDENTIFICATION BY MASS SPECTROMETRY [LARGE SCALE ANALYSIS]</scope>
    <source>
        <tissue>Leukemic T-cell</tissue>
    </source>
</reference>
<reference key="8">
    <citation type="journal article" date="2011" name="BMC Syst. Biol.">
        <title>Initial characterization of the human central proteome.</title>
        <authorList>
            <person name="Burkard T.R."/>
            <person name="Planyavsky M."/>
            <person name="Kaupe I."/>
            <person name="Breitwieser F.P."/>
            <person name="Buerckstuemmer T."/>
            <person name="Bennett K.L."/>
            <person name="Superti-Furga G."/>
            <person name="Colinge J."/>
        </authorList>
    </citation>
    <scope>IDENTIFICATION BY MASS SPECTROMETRY [LARGE SCALE ANALYSIS]</scope>
</reference>
<reference key="9">
    <citation type="journal article" date="2013" name="J. Proteome Res.">
        <title>Toward a comprehensive characterization of a human cancer cell phosphoproteome.</title>
        <authorList>
            <person name="Zhou H."/>
            <person name="Di Palma S."/>
            <person name="Preisinger C."/>
            <person name="Peng M."/>
            <person name="Polat A.N."/>
            <person name="Heck A.J."/>
            <person name="Mohammed S."/>
        </authorList>
    </citation>
    <scope>PHOSPHORYLATION [LARGE SCALE ANALYSIS] AT SER-182</scope>
    <scope>IDENTIFICATION BY MASS SPECTROMETRY [LARGE SCALE ANALYSIS]</scope>
    <source>
        <tissue>Cervix carcinoma</tissue>
        <tissue>Erythroleukemia</tissue>
    </source>
</reference>
<reference key="10">
    <citation type="journal article" date="2007" name="Biochemistry">
        <title>Crystal structures of human and murine deoxyribonucleotidases: insights into recognition of substrates and nucleotide analogues.</title>
        <authorList>
            <person name="Wallden K."/>
            <person name="Rinaldo-Matthis A."/>
            <person name="Ruzzenente B."/>
            <person name="Rampazzo C."/>
            <person name="Bianchi V."/>
            <person name="Nordlund P."/>
        </authorList>
    </citation>
    <scope>X-RAY CRYSTALLOGRAPHY (1.2 ANGSTROMS) OF 3-195 IN COMPLEX WITH MAGNESIUM IONS AND THE SUBSTRATE ANALOG DEOXYURIDINE TETRAFLUOROALUMINATE</scope>
    <scope>CATALYTIC ACTIVITY</scope>
    <scope>COFACTOR</scope>
    <scope>SUBUNIT</scope>
</reference>
<gene>
    <name type="primary">NT5C</name>
    <name type="synonym">DNT1</name>
    <name type="synonym">UMPH2</name>
</gene>
<comment type="function">
    <text>Dephosphorylates the 5' and 2'(3')-phosphates of deoxyribonucleotides, with a preference for dUMP and dTMP, intermediate activity towards dGMP, and low activity towards dCMP and dAMP.</text>
</comment>
<comment type="cofactor">
    <cofactor evidence="4">
        <name>Mg(2+)</name>
        <dbReference type="ChEBI" id="CHEBI:18420"/>
    </cofactor>
</comment>
<comment type="subunit">
    <text evidence="4">Homodimer.</text>
</comment>
<comment type="interaction">
    <interactant intactId="EBI-6137412">
        <id>Q8TCD5</id>
    </interactant>
    <interactant intactId="EBI-6137412">
        <id>Q8TCD5</id>
        <label>NT5C</label>
    </interactant>
    <organismsDiffer>false</organismsDiffer>
    <experiments>6</experiments>
</comment>
<comment type="subcellular location">
    <subcellularLocation>
        <location>Cytoplasm</location>
    </subcellularLocation>
</comment>
<comment type="alternative products">
    <event type="alternative splicing"/>
    <isoform>
        <id>Q8TCD5-1</id>
        <name>1</name>
        <sequence type="displayed"/>
    </isoform>
    <isoform>
        <id>Q8TCD5-2</id>
        <name>2</name>
        <sequence type="described" ref="VSP_008710 VSP_008711 VSP_008712"/>
    </isoform>
</comment>
<comment type="tissue specificity">
    <text evidence="2">Detected in skeletal muscle, heart and pancreas.</text>
</comment>
<comment type="miscellaneous">
    <molecule>Isoform 2</molecule>
    <text evidence="6">May be produced at very low levels due to a premature stop codon in the mRNA, leading to nonsense-mediated mRNA decay.</text>
</comment>
<comment type="similarity">
    <text evidence="6">Belongs to the 5'(3')-deoxyribonucleotidase family.</text>
</comment>
<feature type="chain" id="PRO_0000164371" description="5'(3')-deoxyribonucleotidase, cytosolic type">
    <location>
        <begin position="1"/>
        <end position="201"/>
    </location>
</feature>
<feature type="active site" description="Nucleophile" evidence="6">
    <location>
        <position position="10"/>
    </location>
</feature>
<feature type="active site" description="Proton donor" evidence="6">
    <location>
        <position position="12"/>
    </location>
</feature>
<feature type="binding site">
    <location>
        <position position="10"/>
    </location>
    <ligand>
        <name>Mg(2+)</name>
        <dbReference type="ChEBI" id="CHEBI:18420"/>
    </ligand>
</feature>
<feature type="binding site">
    <location>
        <position position="12"/>
    </location>
    <ligand>
        <name>Mg(2+)</name>
        <dbReference type="ChEBI" id="CHEBI:18420"/>
    </ligand>
</feature>
<feature type="binding site">
    <location>
        <position position="18"/>
    </location>
    <ligand>
        <name>substrate</name>
    </ligand>
</feature>
<feature type="binding site">
    <location>
        <position position="44"/>
    </location>
    <ligand>
        <name>substrate</name>
    </ligand>
</feature>
<feature type="binding site" evidence="1">
    <location>
        <position position="65"/>
    </location>
    <ligand>
        <name>substrate</name>
    </ligand>
</feature>
<feature type="binding site" evidence="6">
    <location>
        <position position="99"/>
    </location>
    <ligand>
        <name>substrate</name>
    </ligand>
</feature>
<feature type="binding site" evidence="6">
    <location>
        <position position="134"/>
    </location>
    <ligand>
        <name>substrate</name>
    </ligand>
</feature>
<feature type="binding site">
    <location>
        <position position="145"/>
    </location>
    <ligand>
        <name>Mg(2+)</name>
        <dbReference type="ChEBI" id="CHEBI:18420"/>
    </ligand>
</feature>
<feature type="modified residue" description="Phosphoserine" evidence="7 8 9">
    <location>
        <position position="182"/>
    </location>
</feature>
<feature type="splice variant" id="VSP_008710" description="In isoform 2." evidence="5">
    <location>
        <begin position="93"/>
        <end position="100"/>
    </location>
</feature>
<feature type="splice variant" id="VSP_008711" description="In isoform 2." evidence="5">
    <original>YRWVEQHLGPQFV</original>
    <variation>VWLPRPYSARGAA</variation>
    <location>
        <begin position="113"/>
        <end position="125"/>
    </location>
</feature>
<feature type="splice variant" id="VSP_008712" description="In isoform 2." evidence="5">
    <location>
        <begin position="126"/>
        <end position="201"/>
    </location>
</feature>
<feature type="sequence variant" id="VAR_048102" description="In dbSNP:rs11541956." evidence="3">
    <original>P</original>
    <variation>L</variation>
    <location>
        <position position="68"/>
    </location>
</feature>
<feature type="strand" evidence="10">
    <location>
        <begin position="5"/>
        <end position="9"/>
    </location>
</feature>
<feature type="turn" evidence="10">
    <location>
        <begin position="13"/>
        <end position="15"/>
    </location>
</feature>
<feature type="helix" evidence="10">
    <location>
        <begin position="18"/>
        <end position="29"/>
    </location>
</feature>
<feature type="helix" evidence="10">
    <location>
        <begin position="38"/>
        <end position="40"/>
    </location>
</feature>
<feature type="helix" evidence="10">
    <location>
        <begin position="46"/>
        <end position="53"/>
    </location>
</feature>
<feature type="helix" evidence="10">
    <location>
        <begin position="57"/>
        <end position="65"/>
    </location>
</feature>
<feature type="turn" evidence="10">
    <location>
        <begin position="68"/>
        <end position="73"/>
    </location>
</feature>
<feature type="helix" evidence="10">
    <location>
        <begin position="80"/>
        <end position="89"/>
    </location>
</feature>
<feature type="strand" evidence="10">
    <location>
        <begin position="93"/>
        <end position="99"/>
    </location>
</feature>
<feature type="turn" evidence="10">
    <location>
        <begin position="106"/>
        <end position="108"/>
    </location>
</feature>
<feature type="helix" evidence="10">
    <location>
        <begin position="109"/>
        <end position="120"/>
    </location>
</feature>
<feature type="helix" evidence="10">
    <location>
        <begin position="122"/>
        <end position="125"/>
    </location>
</feature>
<feature type="strand" evidence="10">
    <location>
        <begin position="128"/>
        <end position="130"/>
    </location>
</feature>
<feature type="helix" evidence="10">
    <location>
        <begin position="134"/>
        <end position="136"/>
    </location>
</feature>
<feature type="strand" evidence="10">
    <location>
        <begin position="140"/>
        <end position="147"/>
    </location>
</feature>
<feature type="strand" evidence="10">
    <location>
        <begin position="157"/>
        <end position="163"/>
    </location>
</feature>
<feature type="helix" evidence="10">
    <location>
        <begin position="166"/>
        <end position="168"/>
    </location>
</feature>
<feature type="strand" evidence="11">
    <location>
        <begin position="177"/>
        <end position="180"/>
    </location>
</feature>
<feature type="helix" evidence="10">
    <location>
        <begin position="187"/>
        <end position="192"/>
    </location>
</feature>
<dbReference type="EC" id="3.1.3.-"/>
<dbReference type="EMBL" id="AF154829">
    <property type="protein sequence ID" value="AAF36534.2"/>
    <property type="molecule type" value="mRNA"/>
</dbReference>
<dbReference type="EMBL" id="AK000419">
    <property type="protein sequence ID" value="BAA91151.1"/>
    <property type="molecule type" value="mRNA"/>
</dbReference>
<dbReference type="EMBL" id="AC022211">
    <property type="status" value="NOT_ANNOTATED_CDS"/>
    <property type="molecule type" value="Genomic_DNA"/>
</dbReference>
<dbReference type="EMBL" id="BC008183">
    <property type="protein sequence ID" value="AAH08183.1"/>
    <property type="molecule type" value="mRNA"/>
</dbReference>
<dbReference type="EMBL" id="BC017454">
    <property type="protein sequence ID" value="AAH17454.1"/>
    <property type="molecule type" value="mRNA"/>
</dbReference>
<dbReference type="EMBL" id="BC022334">
    <property type="protein sequence ID" value="AAH22334.1"/>
    <property type="molecule type" value="mRNA"/>
</dbReference>
<dbReference type="EMBL" id="BK000192">
    <property type="protein sequence ID" value="DAA00070.1"/>
    <property type="molecule type" value="Genomic_DNA"/>
</dbReference>
<dbReference type="CCDS" id="CCDS11715.1">
    <molecule id="Q8TCD5-1"/>
</dbReference>
<dbReference type="RefSeq" id="NP_001239306.1">
    <property type="nucleotide sequence ID" value="NM_001252377.1"/>
</dbReference>
<dbReference type="RefSeq" id="NP_055410.1">
    <molecule id="Q8TCD5-1"/>
    <property type="nucleotide sequence ID" value="NM_014595.3"/>
</dbReference>
<dbReference type="PDB" id="2I7D">
    <property type="method" value="X-ray"/>
    <property type="resolution" value="1.20 A"/>
    <property type="chains" value="A/B=3-195"/>
</dbReference>
<dbReference type="PDB" id="4L57">
    <property type="method" value="X-ray"/>
    <property type="resolution" value="1.08 A"/>
    <property type="chains" value="A/B=1-195"/>
</dbReference>
<dbReference type="PDB" id="4YIH">
    <property type="method" value="X-ray"/>
    <property type="resolution" value="1.82 A"/>
    <property type="chains" value="A/B=1-195"/>
</dbReference>
<dbReference type="PDB" id="6G2N">
    <property type="method" value="X-ray"/>
    <property type="resolution" value="1.40 A"/>
    <property type="chains" value="A/B=2-201"/>
</dbReference>
<dbReference type="PDBsum" id="2I7D"/>
<dbReference type="PDBsum" id="4L57"/>
<dbReference type="PDBsum" id="4YIH"/>
<dbReference type="PDBsum" id="6G2N"/>
<dbReference type="BMRB" id="Q8TCD5"/>
<dbReference type="SMR" id="Q8TCD5"/>
<dbReference type="BioGRID" id="119049">
    <property type="interactions" value="59"/>
</dbReference>
<dbReference type="FunCoup" id="Q8TCD5">
    <property type="interactions" value="1005"/>
</dbReference>
<dbReference type="IntAct" id="Q8TCD5">
    <property type="interactions" value="36"/>
</dbReference>
<dbReference type="STRING" id="9606.ENSP00000245552"/>
<dbReference type="ChEMBL" id="CHEMBL3751653"/>
<dbReference type="DrugBank" id="DB00709">
    <property type="generic name" value="Lamivudine"/>
</dbReference>
<dbReference type="DEPOD" id="NT5C"/>
<dbReference type="iPTMnet" id="Q8TCD5"/>
<dbReference type="PhosphoSitePlus" id="Q8TCD5"/>
<dbReference type="BioMuta" id="NT5C"/>
<dbReference type="DMDM" id="38258193"/>
<dbReference type="OGP" id="Q8TCD5"/>
<dbReference type="jPOST" id="Q8TCD5"/>
<dbReference type="MassIVE" id="Q8TCD5"/>
<dbReference type="PaxDb" id="9606-ENSP00000245552"/>
<dbReference type="PeptideAtlas" id="Q8TCD5"/>
<dbReference type="ProteomicsDB" id="74121">
    <molecule id="Q8TCD5-1"/>
</dbReference>
<dbReference type="ProteomicsDB" id="74122">
    <molecule id="Q8TCD5-2"/>
</dbReference>
<dbReference type="Pumba" id="Q8TCD5"/>
<dbReference type="Antibodypedia" id="19500">
    <property type="antibodies" value="74 antibodies from 18 providers"/>
</dbReference>
<dbReference type="DNASU" id="30833"/>
<dbReference type="Ensembl" id="ENST00000245552.7">
    <molecule id="Q8TCD5-1"/>
    <property type="protein sequence ID" value="ENSP00000245552.2"/>
    <property type="gene ID" value="ENSG00000125458.7"/>
</dbReference>
<dbReference type="Ensembl" id="ENST00000580758.5">
    <molecule id="Q8TCD5-2"/>
    <property type="protein sequence ID" value="ENSP00000462123.1"/>
    <property type="gene ID" value="ENSG00000125458.7"/>
</dbReference>
<dbReference type="GeneID" id="30833"/>
<dbReference type="KEGG" id="hsa:30833"/>
<dbReference type="MANE-Select" id="ENST00000245552.7">
    <property type="protein sequence ID" value="ENSP00000245552.2"/>
    <property type="RefSeq nucleotide sequence ID" value="NM_014595.3"/>
    <property type="RefSeq protein sequence ID" value="NP_055410.1"/>
</dbReference>
<dbReference type="UCSC" id="uc060jte.1">
    <molecule id="Q8TCD5-1"/>
    <property type="organism name" value="human"/>
</dbReference>
<dbReference type="AGR" id="HGNC:17144"/>
<dbReference type="CTD" id="30833"/>
<dbReference type="DisGeNET" id="30833"/>
<dbReference type="GeneCards" id="NT5C"/>
<dbReference type="HGNC" id="HGNC:17144">
    <property type="gene designation" value="NT5C"/>
</dbReference>
<dbReference type="HPA" id="ENSG00000125458">
    <property type="expression patterns" value="Low tissue specificity"/>
</dbReference>
<dbReference type="MIM" id="191720">
    <property type="type" value="gene"/>
</dbReference>
<dbReference type="neXtProt" id="NX_Q8TCD5"/>
<dbReference type="OpenTargets" id="ENSG00000125458"/>
<dbReference type="PharmGKB" id="PA31798"/>
<dbReference type="VEuPathDB" id="HostDB:ENSG00000125458"/>
<dbReference type="eggNOG" id="ENOG502QZUW">
    <property type="taxonomic scope" value="Eukaryota"/>
</dbReference>
<dbReference type="GeneTree" id="ENSGT00390000011596"/>
<dbReference type="HOGENOM" id="CLU_2095990_0_0_1"/>
<dbReference type="InParanoid" id="Q8TCD5"/>
<dbReference type="OMA" id="MLHMQDT"/>
<dbReference type="OrthoDB" id="10248475at2759"/>
<dbReference type="PAN-GO" id="Q8TCD5">
    <property type="GO annotations" value="2 GO annotations based on evolutionary models"/>
</dbReference>
<dbReference type="PhylomeDB" id="Q8TCD5"/>
<dbReference type="TreeFam" id="TF331117"/>
<dbReference type="PathwayCommons" id="Q8TCD5"/>
<dbReference type="Reactome" id="R-HSA-73621">
    <property type="pathway name" value="Pyrimidine catabolism"/>
</dbReference>
<dbReference type="Reactome" id="R-HSA-74259">
    <property type="pathway name" value="Purine catabolism"/>
</dbReference>
<dbReference type="SABIO-RK" id="Q8TCD5"/>
<dbReference type="SignaLink" id="Q8TCD5"/>
<dbReference type="BioGRID-ORCS" id="30833">
    <property type="hits" value="28 hits in 1175 CRISPR screens"/>
</dbReference>
<dbReference type="ChiTaRS" id="NT5C">
    <property type="organism name" value="human"/>
</dbReference>
<dbReference type="EvolutionaryTrace" id="Q8TCD5"/>
<dbReference type="GeneWiki" id="NT5C"/>
<dbReference type="GenomeRNAi" id="30833"/>
<dbReference type="Pharos" id="Q8TCD5">
    <property type="development level" value="Tbio"/>
</dbReference>
<dbReference type="PRO" id="PR:Q8TCD5"/>
<dbReference type="Proteomes" id="UP000005640">
    <property type="component" value="Chromosome 17"/>
</dbReference>
<dbReference type="RNAct" id="Q8TCD5">
    <property type="molecule type" value="protein"/>
</dbReference>
<dbReference type="Bgee" id="ENSG00000125458">
    <property type="expression patterns" value="Expressed in mucosa of transverse colon and 149 other cell types or tissues"/>
</dbReference>
<dbReference type="ExpressionAtlas" id="Q8TCD5">
    <property type="expression patterns" value="baseline and differential"/>
</dbReference>
<dbReference type="GO" id="GO:0005737">
    <property type="term" value="C:cytoplasm"/>
    <property type="evidence" value="ECO:0000314"/>
    <property type="project" value="UniProtKB"/>
</dbReference>
<dbReference type="GO" id="GO:0005829">
    <property type="term" value="C:cytosol"/>
    <property type="evidence" value="ECO:0000314"/>
    <property type="project" value="HPA"/>
</dbReference>
<dbReference type="GO" id="GO:0070062">
    <property type="term" value="C:extracellular exosome"/>
    <property type="evidence" value="ECO:0007005"/>
    <property type="project" value="UniProtKB"/>
</dbReference>
<dbReference type="GO" id="GO:0005739">
    <property type="term" value="C:mitochondrion"/>
    <property type="evidence" value="ECO:0006056"/>
    <property type="project" value="FlyBase"/>
</dbReference>
<dbReference type="GO" id="GO:0005634">
    <property type="term" value="C:nucleus"/>
    <property type="evidence" value="ECO:0000314"/>
    <property type="project" value="UniProtKB"/>
</dbReference>
<dbReference type="GO" id="GO:0008253">
    <property type="term" value="F:5'-nucleotidase activity"/>
    <property type="evidence" value="ECO:0000318"/>
    <property type="project" value="GO_Central"/>
</dbReference>
<dbReference type="GO" id="GO:0042802">
    <property type="term" value="F:identical protein binding"/>
    <property type="evidence" value="ECO:0000353"/>
    <property type="project" value="IntAct"/>
</dbReference>
<dbReference type="GO" id="GO:0050483">
    <property type="term" value="F:IMP 5'-nucleotidase activity"/>
    <property type="evidence" value="ECO:0007669"/>
    <property type="project" value="Ensembl"/>
</dbReference>
<dbReference type="GO" id="GO:0046872">
    <property type="term" value="F:metal ion binding"/>
    <property type="evidence" value="ECO:0007669"/>
    <property type="project" value="UniProtKB-KW"/>
</dbReference>
<dbReference type="GO" id="GO:0008252">
    <property type="term" value="F:nucleotidase activity"/>
    <property type="evidence" value="ECO:0000314"/>
    <property type="project" value="UniProtKB"/>
</dbReference>
<dbReference type="GO" id="GO:0019103">
    <property type="term" value="F:pyrimidine nucleotide binding"/>
    <property type="evidence" value="ECO:0000314"/>
    <property type="project" value="UniProtKB"/>
</dbReference>
<dbReference type="GO" id="GO:0000255">
    <property type="term" value="P:allantoin metabolic process"/>
    <property type="evidence" value="ECO:0007669"/>
    <property type="project" value="Ensembl"/>
</dbReference>
<dbReference type="GO" id="GO:0043605">
    <property type="term" value="P:amide catabolic process"/>
    <property type="evidence" value="ECO:0007669"/>
    <property type="project" value="Ensembl"/>
</dbReference>
<dbReference type="GO" id="GO:0006249">
    <property type="term" value="P:dCMP catabolic process"/>
    <property type="evidence" value="ECO:0007669"/>
    <property type="project" value="Ensembl"/>
</dbReference>
<dbReference type="GO" id="GO:0016311">
    <property type="term" value="P:dephosphorylation"/>
    <property type="evidence" value="ECO:0000314"/>
    <property type="project" value="UniProtKB"/>
</dbReference>
<dbReference type="GO" id="GO:0046055">
    <property type="term" value="P:dGMP catabolic process"/>
    <property type="evidence" value="ECO:0007669"/>
    <property type="project" value="Ensembl"/>
</dbReference>
<dbReference type="GO" id="GO:0046074">
    <property type="term" value="P:dTMP catabolic process"/>
    <property type="evidence" value="ECO:0007669"/>
    <property type="project" value="Ensembl"/>
</dbReference>
<dbReference type="GO" id="GO:0046079">
    <property type="term" value="P:dUMP catabolic process"/>
    <property type="evidence" value="ECO:0007669"/>
    <property type="project" value="Ensembl"/>
</dbReference>
<dbReference type="GO" id="GO:0006204">
    <property type="term" value="P:IMP catabolic process"/>
    <property type="evidence" value="ECO:0007669"/>
    <property type="project" value="Ensembl"/>
</dbReference>
<dbReference type="GO" id="GO:0009223">
    <property type="term" value="P:pyrimidine deoxyribonucleotide catabolic process"/>
    <property type="evidence" value="ECO:0000314"/>
    <property type="project" value="UniProtKB"/>
</dbReference>
<dbReference type="GO" id="GO:0046050">
    <property type="term" value="P:UMP catabolic process"/>
    <property type="evidence" value="ECO:0007669"/>
    <property type="project" value="Ensembl"/>
</dbReference>
<dbReference type="CDD" id="cd02587">
    <property type="entry name" value="HAD_5-3dNT"/>
    <property type="match status" value="1"/>
</dbReference>
<dbReference type="FunFam" id="1.10.40.40:FF:000001">
    <property type="entry name" value="5'(3')-deoxyribonucleotidase, cytosolic type"/>
    <property type="match status" value="1"/>
</dbReference>
<dbReference type="FunFam" id="3.40.50.1000:FF:000133">
    <property type="entry name" value="5'(3')-deoxyribonucleotidase, cytosolic type"/>
    <property type="match status" value="1"/>
</dbReference>
<dbReference type="Gene3D" id="1.10.40.40">
    <property type="entry name" value="Deoxyribonucleotidase, domain 2"/>
    <property type="match status" value="1"/>
</dbReference>
<dbReference type="Gene3D" id="3.40.50.1000">
    <property type="entry name" value="HAD superfamily/HAD-like"/>
    <property type="match status" value="1"/>
</dbReference>
<dbReference type="InterPro" id="IPR010708">
    <property type="entry name" value="5'(3')-deoxyribonucleotidase"/>
</dbReference>
<dbReference type="InterPro" id="IPR036412">
    <property type="entry name" value="HAD-like_sf"/>
</dbReference>
<dbReference type="InterPro" id="IPR023214">
    <property type="entry name" value="HAD_sf"/>
</dbReference>
<dbReference type="PANTHER" id="PTHR16504">
    <property type="entry name" value="5'(3')-DEOXYRIBONUCLEOTIDASE"/>
    <property type="match status" value="1"/>
</dbReference>
<dbReference type="PANTHER" id="PTHR16504:SF5">
    <property type="entry name" value="5'(3')-DEOXYRIBONUCLEOTIDASE, CYTOSOLIC TYPE"/>
    <property type="match status" value="1"/>
</dbReference>
<dbReference type="Pfam" id="PF06941">
    <property type="entry name" value="NT5C"/>
    <property type="match status" value="1"/>
</dbReference>
<dbReference type="SFLD" id="SFLDG01145">
    <property type="entry name" value="C1.2.1"/>
    <property type="match status" value="1"/>
</dbReference>
<dbReference type="SFLD" id="SFLDS00003">
    <property type="entry name" value="Haloacid_Dehalogenase"/>
    <property type="match status" value="1"/>
</dbReference>
<dbReference type="SUPFAM" id="SSF56784">
    <property type="entry name" value="HAD-like"/>
    <property type="match status" value="1"/>
</dbReference>